<gene>
    <name evidence="1" type="primary">argS</name>
    <name type="ordered locus">CFF8240_1433</name>
</gene>
<proteinExistence type="inferred from homology"/>
<reference key="1">
    <citation type="submission" date="2006-11" db="EMBL/GenBank/DDBJ databases">
        <title>Sequence of Campylobacter fetus subsp. fetus 82-40.</title>
        <authorList>
            <person name="Fouts D.E."/>
            <person name="Nelson K.E."/>
        </authorList>
    </citation>
    <scope>NUCLEOTIDE SEQUENCE [LARGE SCALE GENOMIC DNA]</scope>
    <source>
        <strain>82-40</strain>
    </source>
</reference>
<comment type="catalytic activity">
    <reaction evidence="1">
        <text>tRNA(Arg) + L-arginine + ATP = L-arginyl-tRNA(Arg) + AMP + diphosphate</text>
        <dbReference type="Rhea" id="RHEA:20301"/>
        <dbReference type="Rhea" id="RHEA-COMP:9658"/>
        <dbReference type="Rhea" id="RHEA-COMP:9673"/>
        <dbReference type="ChEBI" id="CHEBI:30616"/>
        <dbReference type="ChEBI" id="CHEBI:32682"/>
        <dbReference type="ChEBI" id="CHEBI:33019"/>
        <dbReference type="ChEBI" id="CHEBI:78442"/>
        <dbReference type="ChEBI" id="CHEBI:78513"/>
        <dbReference type="ChEBI" id="CHEBI:456215"/>
        <dbReference type="EC" id="6.1.1.19"/>
    </reaction>
</comment>
<comment type="subunit">
    <text evidence="1">Monomer.</text>
</comment>
<comment type="subcellular location">
    <subcellularLocation>
        <location evidence="1">Cytoplasm</location>
    </subcellularLocation>
</comment>
<comment type="similarity">
    <text evidence="1">Belongs to the class-I aminoacyl-tRNA synthetase family.</text>
</comment>
<feature type="chain" id="PRO_1000018009" description="Arginine--tRNA ligase">
    <location>
        <begin position="1"/>
        <end position="531"/>
    </location>
</feature>
<feature type="short sequence motif" description="'HIGH' region">
    <location>
        <begin position="113"/>
        <end position="123"/>
    </location>
</feature>
<dbReference type="EC" id="6.1.1.19" evidence="1"/>
<dbReference type="EMBL" id="CP000487">
    <property type="protein sequence ID" value="ABK82408.1"/>
    <property type="molecule type" value="Genomic_DNA"/>
</dbReference>
<dbReference type="RefSeq" id="WP_002850314.1">
    <property type="nucleotide sequence ID" value="NC_008599.1"/>
</dbReference>
<dbReference type="SMR" id="A0RQU0"/>
<dbReference type="GeneID" id="61065253"/>
<dbReference type="KEGG" id="cff:CFF8240_1433"/>
<dbReference type="eggNOG" id="COG0018">
    <property type="taxonomic scope" value="Bacteria"/>
</dbReference>
<dbReference type="HOGENOM" id="CLU_006406_0_1_7"/>
<dbReference type="Proteomes" id="UP000000760">
    <property type="component" value="Chromosome"/>
</dbReference>
<dbReference type="GO" id="GO:0005737">
    <property type="term" value="C:cytoplasm"/>
    <property type="evidence" value="ECO:0007669"/>
    <property type="project" value="UniProtKB-SubCell"/>
</dbReference>
<dbReference type="GO" id="GO:0004814">
    <property type="term" value="F:arginine-tRNA ligase activity"/>
    <property type="evidence" value="ECO:0007669"/>
    <property type="project" value="UniProtKB-UniRule"/>
</dbReference>
<dbReference type="GO" id="GO:0005524">
    <property type="term" value="F:ATP binding"/>
    <property type="evidence" value="ECO:0007669"/>
    <property type="project" value="UniProtKB-UniRule"/>
</dbReference>
<dbReference type="GO" id="GO:0006420">
    <property type="term" value="P:arginyl-tRNA aminoacylation"/>
    <property type="evidence" value="ECO:0007669"/>
    <property type="project" value="UniProtKB-UniRule"/>
</dbReference>
<dbReference type="CDD" id="cd00671">
    <property type="entry name" value="ArgRS_core"/>
    <property type="match status" value="1"/>
</dbReference>
<dbReference type="FunFam" id="3.40.50.620:FF:000062">
    <property type="entry name" value="Arginine--tRNA ligase"/>
    <property type="match status" value="1"/>
</dbReference>
<dbReference type="Gene3D" id="3.30.1360.70">
    <property type="entry name" value="Arginyl tRNA synthetase N-terminal domain"/>
    <property type="match status" value="1"/>
</dbReference>
<dbReference type="Gene3D" id="3.40.50.620">
    <property type="entry name" value="HUPs"/>
    <property type="match status" value="1"/>
</dbReference>
<dbReference type="Gene3D" id="1.10.730.10">
    <property type="entry name" value="Isoleucyl-tRNA Synthetase, Domain 1"/>
    <property type="match status" value="1"/>
</dbReference>
<dbReference type="HAMAP" id="MF_00123">
    <property type="entry name" value="Arg_tRNA_synth"/>
    <property type="match status" value="1"/>
</dbReference>
<dbReference type="InterPro" id="IPR001412">
    <property type="entry name" value="aa-tRNA-synth_I_CS"/>
</dbReference>
<dbReference type="InterPro" id="IPR001278">
    <property type="entry name" value="Arg-tRNA-ligase"/>
</dbReference>
<dbReference type="InterPro" id="IPR005148">
    <property type="entry name" value="Arg-tRNA-synth_N"/>
</dbReference>
<dbReference type="InterPro" id="IPR036695">
    <property type="entry name" value="Arg-tRNA-synth_N_sf"/>
</dbReference>
<dbReference type="InterPro" id="IPR035684">
    <property type="entry name" value="ArgRS_core"/>
</dbReference>
<dbReference type="InterPro" id="IPR008909">
    <property type="entry name" value="DALR_anticod-bd"/>
</dbReference>
<dbReference type="InterPro" id="IPR014729">
    <property type="entry name" value="Rossmann-like_a/b/a_fold"/>
</dbReference>
<dbReference type="InterPro" id="IPR009080">
    <property type="entry name" value="tRNAsynth_Ia_anticodon-bd"/>
</dbReference>
<dbReference type="NCBIfam" id="TIGR00456">
    <property type="entry name" value="argS"/>
    <property type="match status" value="1"/>
</dbReference>
<dbReference type="PANTHER" id="PTHR11956:SF5">
    <property type="entry name" value="ARGININE--TRNA LIGASE, CYTOPLASMIC"/>
    <property type="match status" value="1"/>
</dbReference>
<dbReference type="PANTHER" id="PTHR11956">
    <property type="entry name" value="ARGINYL-TRNA SYNTHETASE"/>
    <property type="match status" value="1"/>
</dbReference>
<dbReference type="Pfam" id="PF03485">
    <property type="entry name" value="Arg_tRNA_synt_N"/>
    <property type="match status" value="1"/>
</dbReference>
<dbReference type="Pfam" id="PF05746">
    <property type="entry name" value="DALR_1"/>
    <property type="match status" value="1"/>
</dbReference>
<dbReference type="Pfam" id="PF00750">
    <property type="entry name" value="tRNA-synt_1d"/>
    <property type="match status" value="1"/>
</dbReference>
<dbReference type="PRINTS" id="PR01038">
    <property type="entry name" value="TRNASYNTHARG"/>
</dbReference>
<dbReference type="SMART" id="SM01016">
    <property type="entry name" value="Arg_tRNA_synt_N"/>
    <property type="match status" value="1"/>
</dbReference>
<dbReference type="SMART" id="SM00836">
    <property type="entry name" value="DALR_1"/>
    <property type="match status" value="1"/>
</dbReference>
<dbReference type="SUPFAM" id="SSF47323">
    <property type="entry name" value="Anticodon-binding domain of a subclass of class I aminoacyl-tRNA synthetases"/>
    <property type="match status" value="1"/>
</dbReference>
<dbReference type="SUPFAM" id="SSF55190">
    <property type="entry name" value="Arginyl-tRNA synthetase (ArgRS), N-terminal 'additional' domain"/>
    <property type="match status" value="1"/>
</dbReference>
<dbReference type="SUPFAM" id="SSF52374">
    <property type="entry name" value="Nucleotidylyl transferase"/>
    <property type="match status" value="1"/>
</dbReference>
<dbReference type="PROSITE" id="PS00178">
    <property type="entry name" value="AA_TRNA_LIGASE_I"/>
    <property type="match status" value="1"/>
</dbReference>
<name>SYR_CAMFF</name>
<accession>A0RQU0</accession>
<evidence type="ECO:0000255" key="1">
    <source>
        <dbReference type="HAMAP-Rule" id="MF_00123"/>
    </source>
</evidence>
<protein>
    <recommendedName>
        <fullName evidence="1">Arginine--tRNA ligase</fullName>
        <ecNumber evidence="1">6.1.1.19</ecNumber>
    </recommendedName>
    <alternativeName>
        <fullName evidence="1">Arginyl-tRNA synthetase</fullName>
        <shortName evidence="1">ArgRS</shortName>
    </alternativeName>
</protein>
<sequence length="531" mass="59844">MKNSVKSEIYRVLGRDFILEKPKDKNLAHYATPFAFSLAKEFKKSPAIIASQLALKFENHELFDVFSINGYLNFKLKGEFLNSLANNALSLAESFGSKKPQSQKDIFIEYISANPTGPLHIGHVRGAVYGDTLARVARYIGLDVFTEYYINDAGNQIDLLGISISLFAREALFNENVQYPDKYYRGEYIEDIAKLALGKFGKDIFYDESRNLELAEFGKDEVLKIIKKDLQDVGIFIESWASEKSLYDELEGTIKKLASSGQMYEKDQTTYIASTMLGDDSDRVVIRSDGRPTYLAGDIVYHDAKFKKGYKHYINIWGADHHGYIARIKAAINFLGYDESRLEVILMQMVSLLKEGKPFKMSKRAGTSVLMSDILSEIGSDALRFIFISKANTSSLEFDIDELKKEDSSNPIFYINYAHARVNQVFAKASKLPNDVVGADLSNLDESGKNLLFEALILPEVLEDAVTSRSLHKIPEYLKSLSASFHKFYNENRVVGSKNEDELLKLFSVVALSIKVALNLIGIKAKDKMEH</sequence>
<organism>
    <name type="scientific">Campylobacter fetus subsp. fetus (strain 82-40)</name>
    <dbReference type="NCBI Taxonomy" id="360106"/>
    <lineage>
        <taxon>Bacteria</taxon>
        <taxon>Pseudomonadati</taxon>
        <taxon>Campylobacterota</taxon>
        <taxon>Epsilonproteobacteria</taxon>
        <taxon>Campylobacterales</taxon>
        <taxon>Campylobacteraceae</taxon>
        <taxon>Campylobacter</taxon>
    </lineage>
</organism>
<keyword id="KW-0030">Aminoacyl-tRNA synthetase</keyword>
<keyword id="KW-0067">ATP-binding</keyword>
<keyword id="KW-0963">Cytoplasm</keyword>
<keyword id="KW-0436">Ligase</keyword>
<keyword id="KW-0547">Nucleotide-binding</keyword>
<keyword id="KW-0648">Protein biosynthesis</keyword>